<geneLocation type="plasmid">
    <name>pINV</name>
</geneLocation>
<dbReference type="EMBL" id="D50601">
    <property type="protein sequence ID" value="BAA09147.1"/>
    <property type="molecule type" value="Genomic_DNA"/>
</dbReference>
<dbReference type="RefSeq" id="WP_001106823.1">
    <property type="nucleotide sequence ID" value="NZ_WHSK01000208.1"/>
</dbReference>
<dbReference type="SMR" id="P0A226"/>
<dbReference type="STRING" id="216599.GCA_000283715_05229"/>
<dbReference type="GO" id="GO:0015031">
    <property type="term" value="P:protein transport"/>
    <property type="evidence" value="ECO:0007669"/>
    <property type="project" value="UniProtKB-KW"/>
</dbReference>
<dbReference type="InterPro" id="IPR047754">
    <property type="entry name" value="T3SS_SctI-like"/>
</dbReference>
<dbReference type="NCBIfam" id="NF038054">
    <property type="entry name" value="T3SS_SctI"/>
    <property type="match status" value="1"/>
</dbReference>
<gene>
    <name type="primary">mxiI</name>
</gene>
<sequence length="97" mass="10633">MNYIYPVNQVDIIKASDFQSQEISSLEDVVSAKYSDIKMDTDIQVSQIMEMVSNPESLNPESLAKLQTTLSNYSIGVSLAGTLARKTVSAVETLLKS</sequence>
<protein>
    <recommendedName>
        <fullName>Protein MxiI</fullName>
    </recommendedName>
</protein>
<accession>P0A226</accession>
<accession>Q06080</accession>
<evidence type="ECO:0000250" key="1"/>
<evidence type="ECO:0000305" key="2"/>
<keyword id="KW-0614">Plasmid</keyword>
<keyword id="KW-0653">Protein transport</keyword>
<keyword id="KW-0813">Transport</keyword>
<keyword id="KW-0843">Virulence</keyword>
<feature type="chain" id="PRO_0000096662" description="Protein MxiI">
    <location>
        <begin position="1"/>
        <end position="97"/>
    </location>
</feature>
<reference key="1">
    <citation type="submission" date="1995-05" db="EMBL/GenBank/DDBJ databases">
        <title>Comparison and high conservation of nucleotide sequences of spa-mxi regions between S.sonnei and S.flexneri -- identification of a new gene coding plausible membrane protein.</title>
        <authorList>
            <person name="Arakawa E."/>
            <person name="Kato J."/>
            <person name="Ito K."/>
            <person name="Watanabe H."/>
        </authorList>
    </citation>
    <scope>NUCLEOTIDE SEQUENCE [GENOMIC DNA]</scope>
    <source>
        <strain>HW383</strain>
    </source>
</reference>
<name>MXII_SHISO</name>
<comment type="function">
    <text evidence="1">Necessary for the secretion of IPA invasins.</text>
</comment>
<comment type="similarity">
    <text evidence="2">To S.typhimurium PrgJ.</text>
</comment>
<proteinExistence type="inferred from homology"/>
<organism>
    <name type="scientific">Shigella sonnei</name>
    <dbReference type="NCBI Taxonomy" id="624"/>
    <lineage>
        <taxon>Bacteria</taxon>
        <taxon>Pseudomonadati</taxon>
        <taxon>Pseudomonadota</taxon>
        <taxon>Gammaproteobacteria</taxon>
        <taxon>Enterobacterales</taxon>
        <taxon>Enterobacteriaceae</taxon>
        <taxon>Shigella</taxon>
    </lineage>
</organism>